<comment type="function">
    <text evidence="5 6 12 14 16 17 18 19 21 22 23 25">Core component of the 3M and Cul7-RING(FBXW8) complexes, which mediate the ubiquitination and subsequent proteasomal degradation of target proteins (PubMed:12481031, PubMed:12904573, PubMed:21572988, PubMed:21737058, PubMed:24793695, PubMed:35982156). Core component of the 3M complex, a complex required to regulate microtubule dynamics and genome integrity (PubMed:21572988, PubMed:21737058, PubMed:24793695). It is unclear how the 3M complex regulates microtubules, it could act by controlling the level of a microtubule stabilizer (PubMed:24793695). The Cul7-RING(FBXW8) complex alone lacks ubiquitination activity and does not promote polyubiquitination and proteasomal degradation of p53/TP53 (PubMed:16547496, PubMed:17332328, PubMed:35982156). However it mediates recruitment of p53/TP53 for ubiquitination by neddylated CUL1-RBX1 (PubMed:35982156). Interaction with CUL9 is required to inhibit CUL9 activity and ubiquitination of BIRC5 (PubMed:24793696). The Cul7-RING(FBXW8) complex also mediates ubiquitination and consequent degradation of target proteins such as GORASP1, IRS1 and MAP4K1/HPK1 (PubMed:21572988, PubMed:24362026). Ubiquitination of GORASP1 regulates Golgi morphogenesis and dendrite patterning in brain (PubMed:21572988). Mediates ubiquitination and degradation of IRS1 in a mTOR-dependent manner: the Cul7-RING(FBXW8) complex recognizes and binds IRS1 previously phosphorylated by S6 kinase (RPS6KB1 or RPS6KB2) (PubMed:18498745). The Cul7-RING(FBXW8) complex also mediates ubiquitination of MAP4K1/HPK1: recognizes and binds autophosphorylated MAP4K1/HPK1, leading to its degradation, thereby affecting cell proliferation and differentiation (PubMed:24362026). Acts as a regulator in trophoblast cell epithelial-mesenchymal transition and placental development (PubMed:20139075). While the Cul7-RING(FBXW8) and the 3M complexes are associated and involved in common processes, CUL7 and the Cul7-RING(FBXW8) complex may have additional functions. Probably plays a role in the degradation of proteins involved in endothelial proliferation and/or differentiation.</text>
</comment>
<comment type="pathway">
    <text>Protein modification; protein ubiquitination.</text>
</comment>
<comment type="subunit">
    <text evidence="5 6 9 12 13 14 18 19 21 22 23 24 25">Component of the 3M complex, composed of core components CUL7, CCDC8 and OBSL1 (PubMed:21572988, PubMed:21737058, PubMed:24793695). Component of the Cul7-RING(FBXW8) complex consisting of CUL7, RBX1, SKP1 and FBXW8 (PubMed:12481031, PubMed:12904573, PubMed:35982156). Within the Cul7-RING(FBXW8) complex interacts with FBXW8 and RBX1, but not with SKP1 (PubMed:16547496, PubMed:35982156). Interacts with CUL1 (via the C-terminal domain); the interaction seems to be mediated by FBXW8; it is likely specific to FBXW8, but not other F-box proteins (PubMed:35982156). Interacts (via the CPH domain) with p53/TP53; the interaction preferentially involves tetrameric and dimeric p53/TP53; this interaction recruits p53/TP53 for ubiquitination by neddylated CUL1-RBX1 (PubMed:16547496, PubMed:17298945, PubMed:17332328, PubMed:35982156). The CUL7-CUL9 heterodimer seems to interact specifically with p53/TP53 (PubMed:17332328, PubMed:24793696). Interacts with FBXW8; interaction is mutually exclusive of binding to CUL9 or p53/TP53 (PubMed:17332328, PubMed:21572988, PubMed:24362026). Interacts with CUL9; leading to inhibited CUL9 activity (PubMed:15964813, PubMed:17332328). Interacts with OBSL1 (PubMed:21572988, PubMed:21737058). Interacts (as part of the 3M complex) with HDAC4 and HDAC5; it is negatively regulated by ANKRA2 (PubMed:25752541).</text>
</comment>
<comment type="subunit">
    <text evidence="10">(Microbial infection) Interacts with SV40 Large T antigen; this interaction seems to inhibit CUL7.</text>
</comment>
<comment type="interaction">
    <interactant intactId="EBI-308606">
        <id>Q14999</id>
    </interactant>
    <interactant intactId="EBI-15927144">
        <id>O75147-2</id>
        <label>OBSL1</label>
    </interactant>
    <organismsDiffer>false</organismsDiffer>
    <experiments>4</experiments>
</comment>
<comment type="interaction">
    <interactant intactId="EBI-308606">
        <id>Q14999</id>
    </interactant>
    <interactant intactId="EBI-366083">
        <id>P04637</id>
        <label>TP53</label>
    </interactant>
    <organismsDiffer>false</organismsDiffer>
    <experiments>18</experiments>
</comment>
<comment type="subcellular location">
    <subcellularLocation>
        <location>Cytoplasm</location>
    </subcellularLocation>
    <subcellularLocation>
        <location>Cytoplasm</location>
        <location>Cytoskeleton</location>
        <location>Microtubule organizing center</location>
        <location>Centrosome</location>
    </subcellularLocation>
    <subcellularLocation>
        <location>Cytoplasm</location>
        <location>Perinuclear region</location>
    </subcellularLocation>
    <subcellularLocation>
        <location>Golgi apparatus</location>
    </subcellularLocation>
    <text evidence="22">Colocalizes with FBXW8 at the Golgi apparatus in neurons; localization to Golgi is mediated by OBSL1. During mitosis, localizes to the mitotic apparatus (PubMed:24793695). CCDC8 is required for centrosomal location (PubMed:24793695).</text>
</comment>
<comment type="alternative products">
    <event type="alternative splicing"/>
    <isoform>
        <id>Q14999-1</id>
        <name>1</name>
        <sequence type="displayed"/>
    </isoform>
    <isoform>
        <id>Q14999-2</id>
        <name>2</name>
        <sequence type="described" ref="VSP_046105 VSP_046106"/>
    </isoform>
</comment>
<comment type="tissue specificity">
    <text evidence="11">Highly expressed in fetal kidney and adult skeletal muscle. Also abundant in fetal brain, as well as in adult pancreas, kidney, placenta and heart. Detected in trophoblasts, lymphoblasts, osteoblasts, chondrocytes and skin fibroblasts.</text>
</comment>
<comment type="developmental stage">
    <text evidence="17">Highly expressed in invasive placental villi during first trimester.</text>
</comment>
<comment type="domain">
    <text evidence="12 13 14 25">The CPH domain is essential for interaction with p53/TP53.</text>
</comment>
<comment type="PTM">
    <text evidence="14 25">According to a report, may not be neddylated despite the conserved consensus site for neddylation at Lys-1576 (PubMed:17332328). Structural study of the Cul7-RING(FBXW8) reveals that both CUL7 and RBX1 are in orientations that are incompatible with neddylation (PubMed:35982156).</text>
</comment>
<comment type="disease" evidence="11 15 20">
    <disease id="DI-00011">
        <name>3M syndrome 1</name>
        <acronym>3M1</acronym>
        <description>An autosomal recessive disorder characterized by severe pre- and postnatal growth retardation, facial dysmorphism, large head circumference, and normal intelligence and endocrine function. Skeletal changes include long slender tubular bones and tall vertebral bodies.</description>
        <dbReference type="MIM" id="273750"/>
    </disease>
    <text>The disease is caused by variants affecting the gene represented in this entry.</text>
</comment>
<comment type="similarity">
    <text evidence="2">Belongs to the cullin family.</text>
</comment>
<comment type="sequence caution" evidence="28">
    <conflict type="erroneous initiation">
        <sequence resource="EMBL-CDS" id="BAA07551"/>
    </conflict>
    <text>Extended N-terminus.</text>
</comment>
<accession>Q14999</accession>
<accession>B4DYZ0</accession>
<accession>F5H0L1</accession>
<accession>Q5T654</accession>
<feature type="chain" id="PRO_0000119802" description="Cullin-7">
    <location>
        <begin position="1"/>
        <end position="1698"/>
    </location>
</feature>
<feature type="domain" description="CPH" evidence="1">
    <location>
        <begin position="360"/>
        <end position="433"/>
    </location>
</feature>
<feature type="domain" description="DOC" evidence="3">
    <location>
        <begin position="814"/>
        <end position="993"/>
    </location>
</feature>
<feature type="region of interest" description="Disordered" evidence="4">
    <location>
        <begin position="315"/>
        <end position="357"/>
    </location>
</feature>
<feature type="region of interest" description="Disordered" evidence="4">
    <location>
        <begin position="601"/>
        <end position="623"/>
    </location>
</feature>
<feature type="region of interest" description="Disordered" evidence="4">
    <location>
        <begin position="1345"/>
        <end position="1370"/>
    </location>
</feature>
<feature type="compositionally biased region" description="Basic and acidic residues" evidence="4">
    <location>
        <begin position="601"/>
        <end position="611"/>
    </location>
</feature>
<feature type="modified residue" description="Phosphoserine" evidence="31">
    <location>
        <position position="339"/>
    </location>
</feature>
<feature type="cross-link" description="Glycyl lysine isopeptide (Lys-Gly) (interchain with G-Cter in NEDD8)" evidence="1">
    <location>
        <position position="1576"/>
    </location>
</feature>
<feature type="splice variant" id="VSP_046105" description="In isoform 2." evidence="27">
    <original>M</original>
    <variation>MSRGFWLAEPLAGTGPHPAPVAADSRGCSSVPRRHAPSRLSVSTPSRGPGARM</variation>
    <location>
        <position position="1"/>
    </location>
</feature>
<feature type="splice variant" id="VSP_046106" description="In isoform 2." evidence="27">
    <original>G</original>
    <variation>GEGQCGEEGKAGEGLGRLRDSQDTVAGASDLIR</variation>
    <location>
        <position position="194"/>
    </location>
</feature>
<feature type="sequence variant" id="VAR_048841" description="In dbSNP:rs7774330.">
    <original>S</original>
    <variation>G</variation>
    <location>
        <position position="616"/>
    </location>
</feature>
<feature type="sequence variant" id="VAR_026121" description="In dbSNP:rs9381231." evidence="7 8 26">
    <original>Q</original>
    <variation>R</variation>
    <location>
        <position position="813"/>
    </location>
</feature>
<feature type="sequence variant" id="VAR_048842" description="In dbSNP:rs34574340.">
    <original>R</original>
    <variation>Q</variation>
    <location>
        <position position="852"/>
    </location>
</feature>
<feature type="sequence variant" id="VAR_026122" description="In 3M1; uncertain significance; may disrupt interdomain interactions within CUL7; dbSNP:rs61752334." evidence="11 25">
    <original>L</original>
    <variation>R</variation>
    <location>
        <position position="1014"/>
    </location>
</feature>
<feature type="sequence variant" id="VAR_026123" description="In 3M1; requires 2 nucleotide substitutions." evidence="11">
    <original>Q</original>
    <variation>G</variation>
    <location>
        <position position="1246"/>
    </location>
</feature>
<feature type="sequence variant" id="VAR_048843" description="In dbSNP:rs36071170.">
    <original>Q</original>
    <variation>H</variation>
    <location>
        <position position="1246"/>
    </location>
</feature>
<feature type="sequence variant" id="VAR_026124" description="In 3M1; impairs the ability to interact with RBX1, thus hampers the assembly of polyubiquitin chains; dbSNP:rs121918229." evidence="11 25">
    <original>H</original>
    <variation>P</variation>
    <location>
        <position position="1464"/>
    </location>
</feature>
<feature type="sequence variant" id="VAR_071120" description="In 3M1; dbSNP:rs759300846." evidence="20">
    <original>L</original>
    <variation>P</variation>
    <location>
        <position position="1588"/>
    </location>
</feature>
<feature type="mutagenesis site" description="Abolishes interaction with TP53." evidence="25">
    <original>YEEISAGDEGEFRQSN</original>
    <variation>GGGSGGGGSGGGS</variation>
    <location>
        <begin position="389"/>
        <end position="404"/>
    </location>
</feature>
<feature type="strand" evidence="33">
    <location>
        <begin position="12"/>
        <end position="15"/>
    </location>
</feature>
<feature type="strand" evidence="33">
    <location>
        <begin position="18"/>
        <end position="30"/>
    </location>
</feature>
<feature type="strand" evidence="33">
    <location>
        <begin position="34"/>
        <end position="45"/>
    </location>
</feature>
<feature type="strand" evidence="33">
    <location>
        <begin position="63"/>
        <end position="69"/>
    </location>
</feature>
<feature type="helix" evidence="33">
    <location>
        <begin position="71"/>
        <end position="77"/>
    </location>
</feature>
<feature type="helix" evidence="33">
    <location>
        <begin position="79"/>
        <end position="81"/>
    </location>
</feature>
<feature type="turn" evidence="33">
    <location>
        <begin position="82"/>
        <end position="84"/>
    </location>
</feature>
<feature type="helix" evidence="33">
    <location>
        <begin position="116"/>
        <end position="119"/>
    </location>
</feature>
<feature type="helix" evidence="33">
    <location>
        <begin position="142"/>
        <end position="148"/>
    </location>
</feature>
<feature type="strand" evidence="33">
    <location>
        <begin position="150"/>
        <end position="152"/>
    </location>
</feature>
<feature type="helix" evidence="33">
    <location>
        <begin position="153"/>
        <end position="157"/>
    </location>
</feature>
<feature type="turn" evidence="33">
    <location>
        <begin position="158"/>
        <end position="161"/>
    </location>
</feature>
<feature type="helix" evidence="33">
    <location>
        <begin position="162"/>
        <end position="170"/>
    </location>
</feature>
<feature type="helix" evidence="33">
    <location>
        <begin position="176"/>
        <end position="186"/>
    </location>
</feature>
<feature type="helix" evidence="33">
    <location>
        <begin position="198"/>
        <end position="204"/>
    </location>
</feature>
<feature type="turn" evidence="33">
    <location>
        <begin position="207"/>
        <end position="211"/>
    </location>
</feature>
<feature type="helix" evidence="33">
    <location>
        <begin position="216"/>
        <end position="228"/>
    </location>
</feature>
<feature type="helix" evidence="33">
    <location>
        <begin position="247"/>
        <end position="268"/>
    </location>
</feature>
<feature type="helix" evidence="33">
    <location>
        <begin position="288"/>
        <end position="310"/>
    </location>
</feature>
<feature type="helix" evidence="32">
    <location>
        <begin position="360"/>
        <end position="362"/>
    </location>
</feature>
<feature type="strand" evidence="32">
    <location>
        <begin position="363"/>
        <end position="366"/>
    </location>
</feature>
<feature type="helix" evidence="32">
    <location>
        <begin position="367"/>
        <end position="376"/>
    </location>
</feature>
<feature type="strand" evidence="32">
    <location>
        <begin position="382"/>
        <end position="385"/>
    </location>
</feature>
<feature type="strand" evidence="32">
    <location>
        <begin position="397"/>
        <end position="403"/>
    </location>
</feature>
<feature type="strand" evidence="32">
    <location>
        <begin position="407"/>
        <end position="414"/>
    </location>
</feature>
<feature type="turn" evidence="32">
    <location>
        <begin position="415"/>
        <end position="418"/>
    </location>
</feature>
<feature type="strand" evidence="32">
    <location>
        <begin position="419"/>
        <end position="424"/>
    </location>
</feature>
<feature type="helix" evidence="32">
    <location>
        <begin position="425"/>
        <end position="427"/>
    </location>
</feature>
<feature type="strand" evidence="32">
    <location>
        <begin position="428"/>
        <end position="430"/>
    </location>
</feature>
<feature type="helix" evidence="33">
    <location>
        <begin position="467"/>
        <end position="469"/>
    </location>
</feature>
<feature type="helix" evidence="33">
    <location>
        <begin position="491"/>
        <end position="501"/>
    </location>
</feature>
<feature type="helix" evidence="33">
    <location>
        <begin position="506"/>
        <end position="519"/>
    </location>
</feature>
<feature type="helix" evidence="33">
    <location>
        <begin position="526"/>
        <end position="529"/>
    </location>
</feature>
<feature type="helix" evidence="33">
    <location>
        <begin position="537"/>
        <end position="546"/>
    </location>
</feature>
<feature type="helix" evidence="33">
    <location>
        <begin position="553"/>
        <end position="561"/>
    </location>
</feature>
<feature type="turn" evidence="33">
    <location>
        <begin position="563"/>
        <end position="567"/>
    </location>
</feature>
<feature type="helix" evidence="33">
    <location>
        <begin position="620"/>
        <end position="625"/>
    </location>
</feature>
<feature type="helix" evidence="33">
    <location>
        <begin position="633"/>
        <end position="640"/>
    </location>
</feature>
<feature type="helix" evidence="33">
    <location>
        <begin position="652"/>
        <end position="661"/>
    </location>
</feature>
<feature type="helix" evidence="33">
    <location>
        <begin position="664"/>
        <end position="671"/>
    </location>
</feature>
<feature type="turn" evidence="33">
    <location>
        <begin position="680"/>
        <end position="682"/>
    </location>
</feature>
<feature type="helix" evidence="33">
    <location>
        <begin position="683"/>
        <end position="693"/>
    </location>
</feature>
<feature type="strand" evidence="33">
    <location>
        <begin position="696"/>
        <end position="698"/>
    </location>
</feature>
<feature type="helix" evidence="33">
    <location>
        <begin position="699"/>
        <end position="701"/>
    </location>
</feature>
<feature type="helix" evidence="33">
    <location>
        <begin position="704"/>
        <end position="706"/>
    </location>
</feature>
<feature type="helix" evidence="33">
    <location>
        <begin position="711"/>
        <end position="714"/>
    </location>
</feature>
<feature type="helix" evidence="33">
    <location>
        <begin position="723"/>
        <end position="738"/>
    </location>
</feature>
<feature type="helix" evidence="33">
    <location>
        <begin position="741"/>
        <end position="749"/>
    </location>
</feature>
<feature type="helix" evidence="33">
    <location>
        <begin position="751"/>
        <end position="759"/>
    </location>
</feature>
<feature type="turn" evidence="33">
    <location>
        <begin position="760"/>
        <end position="762"/>
    </location>
</feature>
<feature type="strand" evidence="33">
    <location>
        <begin position="766"/>
        <end position="768"/>
    </location>
</feature>
<feature type="helix" evidence="33">
    <location>
        <begin position="769"/>
        <end position="810"/>
    </location>
</feature>
<feature type="helix" evidence="33">
    <location>
        <begin position="820"/>
        <end position="828"/>
    </location>
</feature>
<feature type="strand" evidence="33">
    <location>
        <begin position="841"/>
        <end position="848"/>
    </location>
</feature>
<feature type="helix" evidence="33">
    <location>
        <begin position="850"/>
        <end position="856"/>
    </location>
</feature>
<feature type="strand" evidence="33">
    <location>
        <begin position="857"/>
        <end position="859"/>
    </location>
</feature>
<feature type="strand" evidence="33">
    <location>
        <begin position="874"/>
        <end position="880"/>
    </location>
</feature>
<feature type="strand" evidence="33">
    <location>
        <begin position="887"/>
        <end position="892"/>
    </location>
</feature>
<feature type="strand" evidence="33">
    <location>
        <begin position="897"/>
        <end position="912"/>
    </location>
</feature>
<feature type="turn" evidence="33">
    <location>
        <begin position="913"/>
        <end position="915"/>
    </location>
</feature>
<feature type="strand" evidence="33">
    <location>
        <begin position="918"/>
        <end position="924"/>
    </location>
</feature>
<feature type="strand" evidence="33">
    <location>
        <begin position="930"/>
        <end position="935"/>
    </location>
</feature>
<feature type="strand" evidence="33">
    <location>
        <begin position="943"/>
        <end position="952"/>
    </location>
</feature>
<feature type="helix" evidence="33">
    <location>
        <begin position="953"/>
        <end position="955"/>
    </location>
</feature>
<feature type="strand" evidence="33">
    <location>
        <begin position="963"/>
        <end position="967"/>
    </location>
</feature>
<feature type="helix" evidence="33">
    <location>
        <begin position="977"/>
        <end position="1002"/>
    </location>
</feature>
<feature type="helix" evidence="33">
    <location>
        <begin position="1004"/>
        <end position="1009"/>
    </location>
</feature>
<feature type="helix" evidence="33">
    <location>
        <begin position="1010"/>
        <end position="1028"/>
    </location>
</feature>
<feature type="strand" evidence="33">
    <location>
        <begin position="1029"/>
        <end position="1031"/>
    </location>
</feature>
<feature type="helix" evidence="33">
    <location>
        <begin position="1032"/>
        <end position="1055"/>
    </location>
</feature>
<feature type="strand" evidence="33">
    <location>
        <begin position="1059"/>
        <end position="1061"/>
    </location>
</feature>
<feature type="helix" evidence="33">
    <location>
        <begin position="1064"/>
        <end position="1074"/>
    </location>
</feature>
<feature type="helix" evidence="33">
    <location>
        <begin position="1087"/>
        <end position="1100"/>
    </location>
</feature>
<feature type="helix" evidence="33">
    <location>
        <begin position="1128"/>
        <end position="1131"/>
    </location>
</feature>
<feature type="helix" evidence="33">
    <location>
        <begin position="1139"/>
        <end position="1161"/>
    </location>
</feature>
<feature type="strand" evidence="33">
    <location>
        <begin position="1162"/>
        <end position="1164"/>
    </location>
</feature>
<feature type="helix" evidence="33">
    <location>
        <begin position="1168"/>
        <end position="1187"/>
    </location>
</feature>
<feature type="helix" evidence="33">
    <location>
        <begin position="1191"/>
        <end position="1205"/>
    </location>
</feature>
<feature type="helix" evidence="33">
    <location>
        <begin position="1210"/>
        <end position="1229"/>
    </location>
</feature>
<feature type="helix" evidence="33">
    <location>
        <begin position="1239"/>
        <end position="1252"/>
    </location>
</feature>
<feature type="helix" evidence="33">
    <location>
        <begin position="1253"/>
        <end position="1255"/>
    </location>
</feature>
<feature type="strand" evidence="33">
    <location>
        <begin position="1258"/>
        <end position="1260"/>
    </location>
</feature>
<feature type="helix" evidence="33">
    <location>
        <begin position="1261"/>
        <end position="1276"/>
    </location>
</feature>
<feature type="helix" evidence="33">
    <location>
        <begin position="1284"/>
        <end position="1292"/>
    </location>
</feature>
<feature type="helix" evidence="33">
    <location>
        <begin position="1293"/>
        <end position="1295"/>
    </location>
</feature>
<feature type="helix" evidence="33">
    <location>
        <begin position="1300"/>
        <end position="1324"/>
    </location>
</feature>
<feature type="strand" evidence="33">
    <location>
        <begin position="1388"/>
        <end position="1394"/>
    </location>
</feature>
<feature type="helix" evidence="33">
    <location>
        <begin position="1419"/>
        <end position="1432"/>
    </location>
</feature>
<feature type="strand" evidence="33">
    <location>
        <begin position="1448"/>
        <end position="1458"/>
    </location>
</feature>
<feature type="strand" evidence="33">
    <location>
        <begin position="1464"/>
        <end position="1466"/>
    </location>
</feature>
<feature type="helix" evidence="33">
    <location>
        <begin position="1467"/>
        <end position="1477"/>
    </location>
</feature>
<feature type="helix" evidence="33">
    <location>
        <begin position="1484"/>
        <end position="1491"/>
    </location>
</feature>
<feature type="helix" evidence="33">
    <location>
        <begin position="1498"/>
        <end position="1502"/>
    </location>
</feature>
<feature type="helix" evidence="33">
    <location>
        <begin position="1504"/>
        <end position="1506"/>
    </location>
</feature>
<feature type="strand" evidence="33">
    <location>
        <begin position="1507"/>
        <end position="1509"/>
    </location>
</feature>
<feature type="strand" evidence="33">
    <location>
        <begin position="1524"/>
        <end position="1526"/>
    </location>
</feature>
<feature type="strand" evidence="33">
    <location>
        <begin position="1529"/>
        <end position="1531"/>
    </location>
</feature>
<feature type="helix" evidence="33">
    <location>
        <begin position="1555"/>
        <end position="1576"/>
    </location>
</feature>
<feature type="turn" evidence="33">
    <location>
        <begin position="1577"/>
        <end position="1581"/>
    </location>
</feature>
<feature type="helix" evidence="33">
    <location>
        <begin position="1585"/>
        <end position="1597"/>
    </location>
</feature>
<feature type="strand" evidence="33">
    <location>
        <begin position="1600"/>
        <end position="1602"/>
    </location>
</feature>
<feature type="helix" evidence="33">
    <location>
        <begin position="1604"/>
        <end position="1609"/>
    </location>
</feature>
<feature type="helix" evidence="33">
    <location>
        <begin position="1618"/>
        <end position="1631"/>
    </location>
</feature>
<feature type="strand" evidence="33">
    <location>
        <begin position="1633"/>
        <end position="1636"/>
    </location>
</feature>
<feature type="strand" evidence="33">
    <location>
        <begin position="1638"/>
        <end position="1640"/>
    </location>
</feature>
<feature type="strand" evidence="33">
    <location>
        <begin position="1643"/>
        <end position="1646"/>
    </location>
</feature>
<evidence type="ECO:0000255" key="1"/>
<evidence type="ECO:0000255" key="2">
    <source>
        <dbReference type="PROSITE-ProRule" id="PRU00330"/>
    </source>
</evidence>
<evidence type="ECO:0000255" key="3">
    <source>
        <dbReference type="PROSITE-ProRule" id="PRU00614"/>
    </source>
</evidence>
<evidence type="ECO:0000256" key="4">
    <source>
        <dbReference type="SAM" id="MobiDB-lite"/>
    </source>
</evidence>
<evidence type="ECO:0000269" key="5">
    <source>
    </source>
</evidence>
<evidence type="ECO:0000269" key="6">
    <source>
    </source>
</evidence>
<evidence type="ECO:0000269" key="7">
    <source>
    </source>
</evidence>
<evidence type="ECO:0000269" key="8">
    <source>
    </source>
</evidence>
<evidence type="ECO:0000269" key="9">
    <source>
    </source>
</evidence>
<evidence type="ECO:0000269" key="10">
    <source>
    </source>
</evidence>
<evidence type="ECO:0000269" key="11">
    <source>
    </source>
</evidence>
<evidence type="ECO:0000269" key="12">
    <source>
    </source>
</evidence>
<evidence type="ECO:0000269" key="13">
    <source>
    </source>
</evidence>
<evidence type="ECO:0000269" key="14">
    <source>
    </source>
</evidence>
<evidence type="ECO:0000269" key="15">
    <source>
    </source>
</evidence>
<evidence type="ECO:0000269" key="16">
    <source>
    </source>
</evidence>
<evidence type="ECO:0000269" key="17">
    <source>
    </source>
</evidence>
<evidence type="ECO:0000269" key="18">
    <source>
    </source>
</evidence>
<evidence type="ECO:0000269" key="19">
    <source>
    </source>
</evidence>
<evidence type="ECO:0000269" key="20">
    <source>
    </source>
</evidence>
<evidence type="ECO:0000269" key="21">
    <source>
    </source>
</evidence>
<evidence type="ECO:0000269" key="22">
    <source>
    </source>
</evidence>
<evidence type="ECO:0000269" key="23">
    <source>
    </source>
</evidence>
<evidence type="ECO:0000269" key="24">
    <source>
    </source>
</evidence>
<evidence type="ECO:0000269" key="25">
    <source>
    </source>
</evidence>
<evidence type="ECO:0000269" key="26">
    <source>
    </source>
</evidence>
<evidence type="ECO:0000303" key="27">
    <source>
    </source>
</evidence>
<evidence type="ECO:0000305" key="28"/>
<evidence type="ECO:0007744" key="29">
    <source>
        <dbReference type="PDB" id="2JNG"/>
    </source>
</evidence>
<evidence type="ECO:0007744" key="30">
    <source>
        <dbReference type="PDB" id="7Z8B"/>
    </source>
</evidence>
<evidence type="ECO:0007744" key="31">
    <source>
    </source>
</evidence>
<evidence type="ECO:0007829" key="32">
    <source>
        <dbReference type="PDB" id="2JNG"/>
    </source>
</evidence>
<evidence type="ECO:0007829" key="33">
    <source>
        <dbReference type="PDB" id="7Z8B"/>
    </source>
</evidence>
<gene>
    <name type="primary">CUL7</name>
    <name type="synonym">KIAA0076</name>
</gene>
<keyword id="KW-0002">3D-structure</keyword>
<keyword id="KW-0025">Alternative splicing</keyword>
<keyword id="KW-0963">Cytoplasm</keyword>
<keyword id="KW-0206">Cytoskeleton</keyword>
<keyword id="KW-0225">Disease variant</keyword>
<keyword id="KW-0242">Dwarfism</keyword>
<keyword id="KW-0333">Golgi apparatus</keyword>
<keyword id="KW-0945">Host-virus interaction</keyword>
<keyword id="KW-1017">Isopeptide bond</keyword>
<keyword id="KW-0597">Phosphoprotein</keyword>
<keyword id="KW-1267">Proteomics identification</keyword>
<keyword id="KW-1185">Reference proteome</keyword>
<keyword id="KW-0832">Ubl conjugation</keyword>
<keyword id="KW-0833">Ubl conjugation pathway</keyword>
<name>CUL7_HUMAN</name>
<sequence length="1698" mass="191161">MVGELRYREFRVPLGPGLHAYPDELIRQRVGHDGHPEYQIRWLILRRGDEGDGGSGQVDCKAEHILLWMSKDEIYANCHKMLGEDGQVIGPSQESAGEVGALDKSVLEEMETDVKSLIQRALRQLEECVGTIPPAPLLHTVHVLSAYASIEPLTGVFKDPRVLDLLMHMLSSPDYQIRWSAGRMIQALSSHDAGTRTQILLSLSQQEAIEKHLDFDSRCALLALFAQATLSEHPMSFEGIQLPQVPGRVLFSLVKRYLHVTSLLDQLNDSAAEPGAQNTSAPEELSGERGQLELEFSMAMGTLISELVQAMRWDQASDRPRSSARSPGSIFQPQLADVSPGLPAAQAQPSFRRSRRFRPRSEFASGNTYALYVRDTLQPGMRVRMLDDYEEISAGDEGEFRQSNNGVPPVQVFWESTGRTYWVHWHMLEILGFEEDIEDMVEADEYQGAVASRVLGRALPAWRWRPMTELYAVPYVLPEDEDTEECEHLTLAEWWELLFFIKKLDGPDHQEVLQILQENLDGEILDDEILAELAVPIELAQDLLLTLPQRLNDSALRDLINCHVYKKYGPEALAGNQAYPSLLEAQEDVLLLDAQAQAKDSEDAAKVEAKEPPSQSPNTPLQRLVEGYGPAGKILLDLEQALSSEGTQENKVKPLLLQLQRQPQPFLALMQSLDTPETNRTLHLTVLRILKQLVDFPEALLLPWHEAVDACMACLRSPNTDREVLQELIFFLHRLTSVSRDYAVVLNQLGARDAISKALEKHLGKLELAQELRDMVFKCEKHAHLYRKLITNILGGCIQMVLGQIEDHRRTHQPINIPFFDVFLRYLCQGSSVEVKEDKCWEKVEVSSNPHRASKLTDHNPKTYWESNGSAGSHYITLHMRRGILIRQLTLLVASEDSSYMPARVVVCGGDSTSSLHTELNSVNVMPSASRVILLENLTRFWPIIQIRIKRCQQGGIDTRIRGLEILGPKPTFWPVFREQLCRHTRLFYMVRAQAWSQDMAEDRRSLLHLSSRLNGALRQEQNFADRFLPDDEAAQALGKTCWEALVSPVVQNITSPDEDGISPLGWLLDQYLECQEAVFNPQSRGPAFFSRVRRLTHLLVHVEPCEAPPPVVATPRPKGRNRSHDWSSLATRGLPSSIMRNLTRCWRAVVEKQVNNFLTSSWRDDDFVPRYCEHFNILQNSSSELFGPRAAFLLALQNGCAGALLKLPFLKAAHVSEQFARHIDQQIQGSRIGGAQEMERLAQLQQCLQAVLIFSGLEIATTFEHYYQHYMADRLLGVVSSWLEGAVLEQIGPCFPNRLPQQMLQSLSTSKELQRQFHVYQLQQLDQELLKLEDTEKKIQVGLGASGKEHKSEKEEEAGAAAVVDVAEGEEEEEENEDLYYEGAMPEVSVLVLSRHSWPVASICHTLNPRTCLPSYLRGTLNRYSNFYNKSQSHPALERGSQRRLQWTWLGWAELQFGNQTLHVSTVQMWLLLYLNDLKAVSVESLLAFSGLSADMLNQAIGPLTSSRGPLDLHEQKDIPGGVLKIRDGSKEPRSRWDIVRLIPPQTYLQAEGEDGQNLEKRRNLLNCLIVRILKAHGDEGLHIDQLVCLVLEAWQKGPCPPRGLVSSLGKGSACSSTDVLSCILHLLGKGTLRRHDDRPQVLSYAVPVTVMEPHTESLNPGSSGPNPPLTFHTLQIRSRGVPYASCTATQSFSTFR</sequence>
<protein>
    <recommendedName>
        <fullName>Cullin-7</fullName>
        <shortName>CUL-7</shortName>
    </recommendedName>
</protein>
<dbReference type="EMBL" id="D38548">
    <property type="protein sequence ID" value="BAA07551.2"/>
    <property type="status" value="ALT_INIT"/>
    <property type="molecule type" value="mRNA"/>
</dbReference>
<dbReference type="EMBL" id="AK302668">
    <property type="protein sequence ID" value="BAG63902.1"/>
    <property type="molecule type" value="mRNA"/>
</dbReference>
<dbReference type="EMBL" id="AL355385">
    <property type="status" value="NOT_ANNOTATED_CDS"/>
    <property type="molecule type" value="Genomic_DNA"/>
</dbReference>
<dbReference type="EMBL" id="AL136304">
    <property type="status" value="NOT_ANNOTATED_CDS"/>
    <property type="molecule type" value="Genomic_DNA"/>
</dbReference>
<dbReference type="EMBL" id="BC033647">
    <property type="protein sequence ID" value="AAH33647.1"/>
    <property type="molecule type" value="mRNA"/>
</dbReference>
<dbReference type="CCDS" id="CCDS4881.1">
    <molecule id="Q14999-1"/>
</dbReference>
<dbReference type="RefSeq" id="NP_001161842.1">
    <property type="nucleotide sequence ID" value="NM_001168370.1"/>
</dbReference>
<dbReference type="RefSeq" id="NP_055595.2">
    <molecule id="Q14999-1"/>
    <property type="nucleotide sequence ID" value="NM_014780.4"/>
</dbReference>
<dbReference type="RefSeq" id="XP_005249560.2">
    <molecule id="Q14999-1"/>
    <property type="nucleotide sequence ID" value="XM_005249503.4"/>
</dbReference>
<dbReference type="PDB" id="2JNG">
    <property type="method" value="NMR"/>
    <property type="chains" value="A=360-460"/>
</dbReference>
<dbReference type="PDB" id="7Z8B">
    <property type="method" value="EM"/>
    <property type="resolution" value="2.80 A"/>
    <property type="chains" value="C=1-1698"/>
</dbReference>
<dbReference type="PDBsum" id="2JNG"/>
<dbReference type="PDBsum" id="7Z8B"/>
<dbReference type="BMRB" id="Q14999"/>
<dbReference type="EMDB" id="EMD-14547"/>
<dbReference type="SMR" id="Q14999"/>
<dbReference type="BioGRID" id="115159">
    <property type="interactions" value="855"/>
</dbReference>
<dbReference type="ComplexPortal" id="CPX-2838">
    <property type="entry name" value="3M complex"/>
</dbReference>
<dbReference type="ComplexPortal" id="CPX-7784">
    <property type="entry name" value="SCF E3 ubiquitin ligase complex, FBXW8-CUL7 variant"/>
</dbReference>
<dbReference type="CORUM" id="Q14999"/>
<dbReference type="DIP" id="DIP-31618N"/>
<dbReference type="DIP" id="DIP-60187N"/>
<dbReference type="FunCoup" id="Q14999">
    <property type="interactions" value="1035"/>
</dbReference>
<dbReference type="IntAct" id="Q14999">
    <property type="interactions" value="76"/>
</dbReference>
<dbReference type="MINT" id="Q14999"/>
<dbReference type="STRING" id="9606.ENSP00000438788"/>
<dbReference type="GlyGen" id="Q14999">
    <property type="glycosylation" value="2 sites, 1 N-linked glycan (1 site), 1 O-linked glycan (1 site)"/>
</dbReference>
<dbReference type="iPTMnet" id="Q14999"/>
<dbReference type="PhosphoSitePlus" id="Q14999"/>
<dbReference type="SwissPalm" id="Q14999"/>
<dbReference type="BioMuta" id="CUL7"/>
<dbReference type="DMDM" id="160370003"/>
<dbReference type="jPOST" id="Q14999"/>
<dbReference type="MassIVE" id="Q14999"/>
<dbReference type="PaxDb" id="9606-ENSP00000438788"/>
<dbReference type="PeptideAtlas" id="Q14999"/>
<dbReference type="ProteomicsDB" id="25372"/>
<dbReference type="ProteomicsDB" id="60290">
    <molecule id="Q14999-1"/>
</dbReference>
<dbReference type="Pumba" id="Q14999"/>
<dbReference type="Antibodypedia" id="4223">
    <property type="antibodies" value="199 antibodies from 37 providers"/>
</dbReference>
<dbReference type="DNASU" id="9820"/>
<dbReference type="Ensembl" id="ENST00000265348.9">
    <molecule id="Q14999-1"/>
    <property type="protein sequence ID" value="ENSP00000265348.4"/>
    <property type="gene ID" value="ENSG00000044090.13"/>
</dbReference>
<dbReference type="Ensembl" id="ENST00000690231.1">
    <molecule id="Q14999-1"/>
    <property type="protein sequence ID" value="ENSP00000508461.1"/>
    <property type="gene ID" value="ENSG00000044090.13"/>
</dbReference>
<dbReference type="GeneID" id="9820"/>
<dbReference type="KEGG" id="hsa:9820"/>
<dbReference type="MANE-Select" id="ENST00000265348.9">
    <property type="protein sequence ID" value="ENSP00000265348.4"/>
    <property type="RefSeq nucleotide sequence ID" value="NM_014780.5"/>
    <property type="RefSeq protein sequence ID" value="NP_055595.2"/>
</dbReference>
<dbReference type="UCSC" id="uc003otq.4">
    <molecule id="Q14999-1"/>
    <property type="organism name" value="human"/>
</dbReference>
<dbReference type="AGR" id="HGNC:21024"/>
<dbReference type="CTD" id="9820"/>
<dbReference type="DisGeNET" id="9820"/>
<dbReference type="GeneCards" id="CUL7"/>
<dbReference type="GeneReviews" id="CUL7"/>
<dbReference type="HGNC" id="HGNC:21024">
    <property type="gene designation" value="CUL7"/>
</dbReference>
<dbReference type="HPA" id="ENSG00000044090">
    <property type="expression patterns" value="Low tissue specificity"/>
</dbReference>
<dbReference type="MalaCards" id="CUL7"/>
<dbReference type="MIM" id="273750">
    <property type="type" value="phenotype"/>
</dbReference>
<dbReference type="MIM" id="609577">
    <property type="type" value="gene"/>
</dbReference>
<dbReference type="neXtProt" id="NX_Q14999"/>
<dbReference type="OpenTargets" id="ENSG00000044090"/>
<dbReference type="Orphanet" id="2616">
    <property type="disease" value="3M syndrome"/>
</dbReference>
<dbReference type="PharmGKB" id="PA134897835"/>
<dbReference type="VEuPathDB" id="HostDB:ENSG00000044090"/>
<dbReference type="eggNOG" id="ENOG502RDJD">
    <property type="taxonomic scope" value="Eukaryota"/>
</dbReference>
<dbReference type="GeneTree" id="ENSGT00940000153954"/>
<dbReference type="HOGENOM" id="CLU_001067_1_0_1"/>
<dbReference type="InParanoid" id="Q14999"/>
<dbReference type="OMA" id="RCWPVAS"/>
<dbReference type="OrthoDB" id="9908599at2759"/>
<dbReference type="PAN-GO" id="Q14999">
    <property type="GO annotations" value="4 GO annotations based on evolutionary models"/>
</dbReference>
<dbReference type="PhylomeDB" id="Q14999"/>
<dbReference type="TreeFam" id="TF101154"/>
<dbReference type="PathwayCommons" id="Q14999"/>
<dbReference type="Reactome" id="R-HSA-381038">
    <property type="pathway name" value="XBP1(S) activates chaperone genes"/>
</dbReference>
<dbReference type="Reactome" id="R-HSA-8951664">
    <property type="pathway name" value="Neddylation"/>
</dbReference>
<dbReference type="Reactome" id="R-HSA-983168">
    <property type="pathway name" value="Antigen processing: Ubiquitination &amp; Proteasome degradation"/>
</dbReference>
<dbReference type="SignaLink" id="Q14999"/>
<dbReference type="SIGNOR" id="Q14999"/>
<dbReference type="UniPathway" id="UPA00143"/>
<dbReference type="BioGRID-ORCS" id="9820">
    <property type="hits" value="83 hits in 1211 CRISPR screens"/>
</dbReference>
<dbReference type="ChiTaRS" id="CUL7">
    <property type="organism name" value="human"/>
</dbReference>
<dbReference type="EvolutionaryTrace" id="Q14999"/>
<dbReference type="GeneWiki" id="CUL7"/>
<dbReference type="GenomeRNAi" id="9820"/>
<dbReference type="Pharos" id="Q14999">
    <property type="development level" value="Tbio"/>
</dbReference>
<dbReference type="PRO" id="PR:Q14999"/>
<dbReference type="Proteomes" id="UP000005640">
    <property type="component" value="Chromosome 6"/>
</dbReference>
<dbReference type="RNAct" id="Q14999">
    <property type="molecule type" value="protein"/>
</dbReference>
<dbReference type="Bgee" id="ENSG00000044090">
    <property type="expression patterns" value="Expressed in stromal cell of endometrium and 195 other cell types or tissues"/>
</dbReference>
<dbReference type="ExpressionAtlas" id="Q14999">
    <property type="expression patterns" value="baseline and differential"/>
</dbReference>
<dbReference type="GO" id="GO:1990393">
    <property type="term" value="C:3M complex"/>
    <property type="evidence" value="ECO:0000314"/>
    <property type="project" value="UniProtKB"/>
</dbReference>
<dbReference type="GO" id="GO:0005680">
    <property type="term" value="C:anaphase-promoting complex"/>
    <property type="evidence" value="ECO:0000303"/>
    <property type="project" value="UniProtKB"/>
</dbReference>
<dbReference type="GO" id="GO:0005813">
    <property type="term" value="C:centrosome"/>
    <property type="evidence" value="ECO:0000314"/>
    <property type="project" value="UniProtKB"/>
</dbReference>
<dbReference type="GO" id="GO:0031467">
    <property type="term" value="C:Cul7-RING ubiquitin ligase complex"/>
    <property type="evidence" value="ECO:0000314"/>
    <property type="project" value="UniProtKB"/>
</dbReference>
<dbReference type="GO" id="GO:0005737">
    <property type="term" value="C:cytoplasm"/>
    <property type="evidence" value="ECO:0000314"/>
    <property type="project" value="UniProtKB"/>
</dbReference>
<dbReference type="GO" id="GO:0005829">
    <property type="term" value="C:cytosol"/>
    <property type="evidence" value="ECO:0000304"/>
    <property type="project" value="Reactome"/>
</dbReference>
<dbReference type="GO" id="GO:0005794">
    <property type="term" value="C:Golgi apparatus"/>
    <property type="evidence" value="ECO:0000314"/>
    <property type="project" value="UniProtKB"/>
</dbReference>
<dbReference type="GO" id="GO:0048471">
    <property type="term" value="C:perinuclear region of cytoplasm"/>
    <property type="evidence" value="ECO:0000314"/>
    <property type="project" value="UniProtKB"/>
</dbReference>
<dbReference type="GO" id="GO:0160072">
    <property type="term" value="F:ubiquitin ligase complex scaffold activity"/>
    <property type="evidence" value="ECO:0000314"/>
    <property type="project" value="UniProtKB"/>
</dbReference>
<dbReference type="GO" id="GO:0031625">
    <property type="term" value="F:ubiquitin protein ligase binding"/>
    <property type="evidence" value="ECO:0007669"/>
    <property type="project" value="InterPro"/>
</dbReference>
<dbReference type="GO" id="GO:0001837">
    <property type="term" value="P:epithelial to mesenchymal transition"/>
    <property type="evidence" value="ECO:0000314"/>
    <property type="project" value="UniProtKB"/>
</dbReference>
<dbReference type="GO" id="GO:0007030">
    <property type="term" value="P:Golgi organization"/>
    <property type="evidence" value="ECO:0000250"/>
    <property type="project" value="UniProtKB"/>
</dbReference>
<dbReference type="GO" id="GO:0000226">
    <property type="term" value="P:microtubule cytoskeleton organization"/>
    <property type="evidence" value="ECO:0000315"/>
    <property type="project" value="UniProtKB"/>
</dbReference>
<dbReference type="GO" id="GO:0000281">
    <property type="term" value="P:mitotic cytokinesis"/>
    <property type="evidence" value="ECO:0000315"/>
    <property type="project" value="UniProtKB"/>
</dbReference>
<dbReference type="GO" id="GO:0046627">
    <property type="term" value="P:negative regulation of insulin receptor signaling pathway"/>
    <property type="evidence" value="ECO:0000314"/>
    <property type="project" value="UniProt"/>
</dbReference>
<dbReference type="GO" id="GO:0001890">
    <property type="term" value="P:placenta development"/>
    <property type="evidence" value="ECO:0000314"/>
    <property type="project" value="UniProtKB"/>
</dbReference>
<dbReference type="GO" id="GO:0050775">
    <property type="term" value="P:positive regulation of dendrite morphogenesis"/>
    <property type="evidence" value="ECO:0000316"/>
    <property type="project" value="UniProtKB"/>
</dbReference>
<dbReference type="GO" id="GO:0016567">
    <property type="term" value="P:protein ubiquitination"/>
    <property type="evidence" value="ECO:0000314"/>
    <property type="project" value="UniProtKB"/>
</dbReference>
<dbReference type="GO" id="GO:0006508">
    <property type="term" value="P:proteolysis"/>
    <property type="evidence" value="ECO:0000303"/>
    <property type="project" value="UniProtKB"/>
</dbReference>
<dbReference type="GO" id="GO:0007088">
    <property type="term" value="P:regulation of mitotic nuclear division"/>
    <property type="evidence" value="ECO:0000315"/>
    <property type="project" value="UniProtKB"/>
</dbReference>
<dbReference type="GO" id="GO:0006511">
    <property type="term" value="P:ubiquitin-dependent protein catabolic process"/>
    <property type="evidence" value="ECO:0000314"/>
    <property type="project" value="UniProt"/>
</dbReference>
<dbReference type="GO" id="GO:0001570">
    <property type="term" value="P:vasculogenesis"/>
    <property type="evidence" value="ECO:0000250"/>
    <property type="project" value="UniProtKB"/>
</dbReference>
<dbReference type="CDD" id="cd08665">
    <property type="entry name" value="APC10-CUL7"/>
    <property type="match status" value="1"/>
</dbReference>
<dbReference type="FunFam" id="1.10.10.10:FF:000207">
    <property type="entry name" value="Cullin 9"/>
    <property type="match status" value="1"/>
</dbReference>
<dbReference type="FunFam" id="2.60.120.260:FF:000046">
    <property type="entry name" value="Cullin 9"/>
    <property type="match status" value="1"/>
</dbReference>
<dbReference type="FunFam" id="3.30.230.130:FF:000009">
    <property type="entry name" value="Cullin 9"/>
    <property type="match status" value="1"/>
</dbReference>
<dbReference type="FunFam" id="2.30.30.30:FF:000015">
    <property type="entry name" value="E3 ubiquitin-protein ligase HERC2"/>
    <property type="match status" value="1"/>
</dbReference>
<dbReference type="Gene3D" id="2.30.30.30">
    <property type="match status" value="1"/>
</dbReference>
<dbReference type="Gene3D" id="1.20.1310.10">
    <property type="entry name" value="Cullin Repeats"/>
    <property type="match status" value="1"/>
</dbReference>
<dbReference type="Gene3D" id="3.30.230.130">
    <property type="entry name" value="Cullin, Chain C, Domain 2"/>
    <property type="match status" value="1"/>
</dbReference>
<dbReference type="Gene3D" id="2.60.120.260">
    <property type="entry name" value="Galactose-binding domain-like"/>
    <property type="match status" value="1"/>
</dbReference>
<dbReference type="Gene3D" id="1.10.10.10">
    <property type="entry name" value="Winged helix-like DNA-binding domain superfamily/Winged helix DNA-binding domain"/>
    <property type="match status" value="1"/>
</dbReference>
<dbReference type="InterPro" id="IPR004939">
    <property type="entry name" value="APC_su10/DOC_dom"/>
</dbReference>
<dbReference type="InterPro" id="IPR016024">
    <property type="entry name" value="ARM-type_fold"/>
</dbReference>
<dbReference type="InterPro" id="IPR056405">
    <property type="entry name" value="ARM_CUL7_CUL9"/>
</dbReference>
<dbReference type="InterPro" id="IPR021097">
    <property type="entry name" value="CPH_domain"/>
</dbReference>
<dbReference type="InterPro" id="IPR055486">
    <property type="entry name" value="CUL7/CUL9_N"/>
</dbReference>
<dbReference type="InterPro" id="IPR045093">
    <property type="entry name" value="Cullin"/>
</dbReference>
<dbReference type="InterPro" id="IPR016158">
    <property type="entry name" value="Cullin_homology"/>
</dbReference>
<dbReference type="InterPro" id="IPR036317">
    <property type="entry name" value="Cullin_homology_sf"/>
</dbReference>
<dbReference type="InterPro" id="IPR001373">
    <property type="entry name" value="Cullin_N"/>
</dbReference>
<dbReference type="InterPro" id="IPR019559">
    <property type="entry name" value="Cullin_neddylation_domain"/>
</dbReference>
<dbReference type="InterPro" id="IPR008979">
    <property type="entry name" value="Galactose-bd-like_sf"/>
</dbReference>
<dbReference type="InterPro" id="IPR014722">
    <property type="entry name" value="Rib_uL2_dom2"/>
</dbReference>
<dbReference type="InterPro" id="IPR036388">
    <property type="entry name" value="WH-like_DNA-bd_sf"/>
</dbReference>
<dbReference type="PANTHER" id="PTHR22771">
    <property type="entry name" value="CULLIN AND GALACTOSE-BINDING DOMAIN-CONTAINING"/>
    <property type="match status" value="1"/>
</dbReference>
<dbReference type="PANTHER" id="PTHR22771:SF3">
    <property type="entry name" value="CULLIN-7"/>
    <property type="match status" value="1"/>
</dbReference>
<dbReference type="Pfam" id="PF03256">
    <property type="entry name" value="ANAPC10"/>
    <property type="match status" value="1"/>
</dbReference>
<dbReference type="Pfam" id="PF24742">
    <property type="entry name" value="ARM_CUL7_CUL9"/>
    <property type="match status" value="1"/>
</dbReference>
<dbReference type="Pfam" id="PF11515">
    <property type="entry name" value="Cul7"/>
    <property type="match status" value="1"/>
</dbReference>
<dbReference type="Pfam" id="PF23168">
    <property type="entry name" value="CUL7_CUL9_N"/>
    <property type="match status" value="1"/>
</dbReference>
<dbReference type="Pfam" id="PF00888">
    <property type="entry name" value="Cullin"/>
    <property type="match status" value="1"/>
</dbReference>
<dbReference type="SMART" id="SM01337">
    <property type="entry name" value="APC10"/>
    <property type="match status" value="1"/>
</dbReference>
<dbReference type="SMART" id="SM00884">
    <property type="entry name" value="Cullin_Nedd8"/>
    <property type="match status" value="1"/>
</dbReference>
<dbReference type="SUPFAM" id="SSF48371">
    <property type="entry name" value="ARM repeat"/>
    <property type="match status" value="1"/>
</dbReference>
<dbReference type="SUPFAM" id="SSF75632">
    <property type="entry name" value="Cullin homology domain"/>
    <property type="match status" value="1"/>
</dbReference>
<dbReference type="SUPFAM" id="SSF49785">
    <property type="entry name" value="Galactose-binding domain-like"/>
    <property type="match status" value="1"/>
</dbReference>
<dbReference type="SUPFAM" id="SSF63748">
    <property type="entry name" value="Tudor/PWWP/MBT"/>
    <property type="match status" value="1"/>
</dbReference>
<dbReference type="PROSITE" id="PS50069">
    <property type="entry name" value="CULLIN_2"/>
    <property type="match status" value="1"/>
</dbReference>
<dbReference type="PROSITE" id="PS51284">
    <property type="entry name" value="DOC"/>
    <property type="match status" value="1"/>
</dbReference>
<reference key="1">
    <citation type="journal article" date="1994" name="DNA Res.">
        <title>Prediction of the coding sequences of unidentified human genes. II. The coding sequences of 40 new genes (KIAA0041-KIAA0080) deduced by analysis of cDNA clones from human cell line KG-1.</title>
        <authorList>
            <person name="Nomura N."/>
            <person name="Nagase T."/>
            <person name="Miyajima N."/>
            <person name="Sazuka T."/>
            <person name="Tanaka A."/>
            <person name="Sato S."/>
            <person name="Seki N."/>
            <person name="Kawarabayasi Y."/>
            <person name="Ishikawa K."/>
            <person name="Tabata S."/>
        </authorList>
    </citation>
    <scope>NUCLEOTIDE SEQUENCE [LARGE SCALE MRNA] (ISOFORM 1)</scope>
    <scope>VARIANT ARG-813</scope>
    <source>
        <tissue>Bone marrow</tissue>
    </source>
</reference>
<reference key="2">
    <citation type="journal article" date="2004" name="Nat. Genet.">
        <title>Complete sequencing and characterization of 21,243 full-length human cDNAs.</title>
        <authorList>
            <person name="Ota T."/>
            <person name="Suzuki Y."/>
            <person name="Nishikawa T."/>
            <person name="Otsuki T."/>
            <person name="Sugiyama T."/>
            <person name="Irie R."/>
            <person name="Wakamatsu A."/>
            <person name="Hayashi K."/>
            <person name="Sato H."/>
            <person name="Nagai K."/>
            <person name="Kimura K."/>
            <person name="Makita H."/>
            <person name="Sekine M."/>
            <person name="Obayashi M."/>
            <person name="Nishi T."/>
            <person name="Shibahara T."/>
            <person name="Tanaka T."/>
            <person name="Ishii S."/>
            <person name="Yamamoto J."/>
            <person name="Saito K."/>
            <person name="Kawai Y."/>
            <person name="Isono Y."/>
            <person name="Nakamura Y."/>
            <person name="Nagahari K."/>
            <person name="Murakami K."/>
            <person name="Yasuda T."/>
            <person name="Iwayanagi T."/>
            <person name="Wagatsuma M."/>
            <person name="Shiratori A."/>
            <person name="Sudo H."/>
            <person name="Hosoiri T."/>
            <person name="Kaku Y."/>
            <person name="Kodaira H."/>
            <person name="Kondo H."/>
            <person name="Sugawara M."/>
            <person name="Takahashi M."/>
            <person name="Kanda K."/>
            <person name="Yokoi T."/>
            <person name="Furuya T."/>
            <person name="Kikkawa E."/>
            <person name="Omura Y."/>
            <person name="Abe K."/>
            <person name="Kamihara K."/>
            <person name="Katsuta N."/>
            <person name="Sato K."/>
            <person name="Tanikawa M."/>
            <person name="Yamazaki M."/>
            <person name="Ninomiya K."/>
            <person name="Ishibashi T."/>
            <person name="Yamashita H."/>
            <person name="Murakawa K."/>
            <person name="Fujimori K."/>
            <person name="Tanai H."/>
            <person name="Kimata M."/>
            <person name="Watanabe M."/>
            <person name="Hiraoka S."/>
            <person name="Chiba Y."/>
            <person name="Ishida S."/>
            <person name="Ono Y."/>
            <person name="Takiguchi S."/>
            <person name="Watanabe S."/>
            <person name="Yosida M."/>
            <person name="Hotuta T."/>
            <person name="Kusano J."/>
            <person name="Kanehori K."/>
            <person name="Takahashi-Fujii A."/>
            <person name="Hara H."/>
            <person name="Tanase T.-O."/>
            <person name="Nomura Y."/>
            <person name="Togiya S."/>
            <person name="Komai F."/>
            <person name="Hara R."/>
            <person name="Takeuchi K."/>
            <person name="Arita M."/>
            <person name="Imose N."/>
            <person name="Musashino K."/>
            <person name="Yuuki H."/>
            <person name="Oshima A."/>
            <person name="Sasaki N."/>
            <person name="Aotsuka S."/>
            <person name="Yoshikawa Y."/>
            <person name="Matsunawa H."/>
            <person name="Ichihara T."/>
            <person name="Shiohata N."/>
            <person name="Sano S."/>
            <person name="Moriya S."/>
            <person name="Momiyama H."/>
            <person name="Satoh N."/>
            <person name="Takami S."/>
            <person name="Terashima Y."/>
            <person name="Suzuki O."/>
            <person name="Nakagawa S."/>
            <person name="Senoh A."/>
            <person name="Mizoguchi H."/>
            <person name="Goto Y."/>
            <person name="Shimizu F."/>
            <person name="Wakebe H."/>
            <person name="Hishigaki H."/>
            <person name="Watanabe T."/>
            <person name="Sugiyama A."/>
            <person name="Takemoto M."/>
            <person name="Kawakami B."/>
            <person name="Yamazaki M."/>
            <person name="Watanabe K."/>
            <person name="Kumagai A."/>
            <person name="Itakura S."/>
            <person name="Fukuzumi Y."/>
            <person name="Fujimori Y."/>
            <person name="Komiyama M."/>
            <person name="Tashiro H."/>
            <person name="Tanigami A."/>
            <person name="Fujiwara T."/>
            <person name="Ono T."/>
            <person name="Yamada K."/>
            <person name="Fujii Y."/>
            <person name="Ozaki K."/>
            <person name="Hirao M."/>
            <person name="Ohmori Y."/>
            <person name="Kawabata A."/>
            <person name="Hikiji T."/>
            <person name="Kobatake N."/>
            <person name="Inagaki H."/>
            <person name="Ikema Y."/>
            <person name="Okamoto S."/>
            <person name="Okitani R."/>
            <person name="Kawakami T."/>
            <person name="Noguchi S."/>
            <person name="Itoh T."/>
            <person name="Shigeta K."/>
            <person name="Senba T."/>
            <person name="Matsumura K."/>
            <person name="Nakajima Y."/>
            <person name="Mizuno T."/>
            <person name="Morinaga M."/>
            <person name="Sasaki M."/>
            <person name="Togashi T."/>
            <person name="Oyama M."/>
            <person name="Hata H."/>
            <person name="Watanabe M."/>
            <person name="Komatsu T."/>
            <person name="Mizushima-Sugano J."/>
            <person name="Satoh T."/>
            <person name="Shirai Y."/>
            <person name="Takahashi Y."/>
            <person name="Nakagawa K."/>
            <person name="Okumura K."/>
            <person name="Nagase T."/>
            <person name="Nomura N."/>
            <person name="Kikuchi H."/>
            <person name="Masuho Y."/>
            <person name="Yamashita R."/>
            <person name="Nakai K."/>
            <person name="Yada T."/>
            <person name="Nakamura Y."/>
            <person name="Ohara O."/>
            <person name="Isogai T."/>
            <person name="Sugano S."/>
        </authorList>
    </citation>
    <scope>NUCLEOTIDE SEQUENCE [LARGE SCALE MRNA] (ISOFORM 2)</scope>
    <scope>VARIANT ARG-813</scope>
    <source>
        <tissue>Testis</tissue>
    </source>
</reference>
<reference key="3">
    <citation type="journal article" date="2003" name="Nature">
        <title>The DNA sequence and analysis of human chromosome 6.</title>
        <authorList>
            <person name="Mungall A.J."/>
            <person name="Palmer S.A."/>
            <person name="Sims S.K."/>
            <person name="Edwards C.A."/>
            <person name="Ashurst J.L."/>
            <person name="Wilming L."/>
            <person name="Jones M.C."/>
            <person name="Horton R."/>
            <person name="Hunt S.E."/>
            <person name="Scott C.E."/>
            <person name="Gilbert J.G.R."/>
            <person name="Clamp M.E."/>
            <person name="Bethel G."/>
            <person name="Milne S."/>
            <person name="Ainscough R."/>
            <person name="Almeida J.P."/>
            <person name="Ambrose K.D."/>
            <person name="Andrews T.D."/>
            <person name="Ashwell R.I.S."/>
            <person name="Babbage A.K."/>
            <person name="Bagguley C.L."/>
            <person name="Bailey J."/>
            <person name="Banerjee R."/>
            <person name="Barker D.J."/>
            <person name="Barlow K.F."/>
            <person name="Bates K."/>
            <person name="Beare D.M."/>
            <person name="Beasley H."/>
            <person name="Beasley O."/>
            <person name="Bird C.P."/>
            <person name="Blakey S.E."/>
            <person name="Bray-Allen S."/>
            <person name="Brook J."/>
            <person name="Brown A.J."/>
            <person name="Brown J.Y."/>
            <person name="Burford D.C."/>
            <person name="Burrill W."/>
            <person name="Burton J."/>
            <person name="Carder C."/>
            <person name="Carter N.P."/>
            <person name="Chapman J.C."/>
            <person name="Clark S.Y."/>
            <person name="Clark G."/>
            <person name="Clee C.M."/>
            <person name="Clegg S."/>
            <person name="Cobley V."/>
            <person name="Collier R.E."/>
            <person name="Collins J.E."/>
            <person name="Colman L.K."/>
            <person name="Corby N.R."/>
            <person name="Coville G.J."/>
            <person name="Culley K.M."/>
            <person name="Dhami P."/>
            <person name="Davies J."/>
            <person name="Dunn M."/>
            <person name="Earthrowl M.E."/>
            <person name="Ellington A.E."/>
            <person name="Evans K.A."/>
            <person name="Faulkner L."/>
            <person name="Francis M.D."/>
            <person name="Frankish A."/>
            <person name="Frankland J."/>
            <person name="French L."/>
            <person name="Garner P."/>
            <person name="Garnett J."/>
            <person name="Ghori M.J."/>
            <person name="Gilby L.M."/>
            <person name="Gillson C.J."/>
            <person name="Glithero R.J."/>
            <person name="Grafham D.V."/>
            <person name="Grant M."/>
            <person name="Gribble S."/>
            <person name="Griffiths C."/>
            <person name="Griffiths M.N.D."/>
            <person name="Hall R."/>
            <person name="Halls K.S."/>
            <person name="Hammond S."/>
            <person name="Harley J.L."/>
            <person name="Hart E.A."/>
            <person name="Heath P.D."/>
            <person name="Heathcott R."/>
            <person name="Holmes S.J."/>
            <person name="Howden P.J."/>
            <person name="Howe K.L."/>
            <person name="Howell G.R."/>
            <person name="Huckle E."/>
            <person name="Humphray S.J."/>
            <person name="Humphries M.D."/>
            <person name="Hunt A.R."/>
            <person name="Johnson C.M."/>
            <person name="Joy A.A."/>
            <person name="Kay M."/>
            <person name="Keenan S.J."/>
            <person name="Kimberley A.M."/>
            <person name="King A."/>
            <person name="Laird G.K."/>
            <person name="Langford C."/>
            <person name="Lawlor S."/>
            <person name="Leongamornlert D.A."/>
            <person name="Leversha M."/>
            <person name="Lloyd C.R."/>
            <person name="Lloyd D.M."/>
            <person name="Loveland J.E."/>
            <person name="Lovell J."/>
            <person name="Martin S."/>
            <person name="Mashreghi-Mohammadi M."/>
            <person name="Maslen G.L."/>
            <person name="Matthews L."/>
            <person name="McCann O.T."/>
            <person name="McLaren S.J."/>
            <person name="McLay K."/>
            <person name="McMurray A."/>
            <person name="Moore M.J.F."/>
            <person name="Mullikin J.C."/>
            <person name="Niblett D."/>
            <person name="Nickerson T."/>
            <person name="Novik K.L."/>
            <person name="Oliver K."/>
            <person name="Overton-Larty E.K."/>
            <person name="Parker A."/>
            <person name="Patel R."/>
            <person name="Pearce A.V."/>
            <person name="Peck A.I."/>
            <person name="Phillimore B.J.C.T."/>
            <person name="Phillips S."/>
            <person name="Plumb R.W."/>
            <person name="Porter K.M."/>
            <person name="Ramsey Y."/>
            <person name="Ranby S.A."/>
            <person name="Rice C.M."/>
            <person name="Ross M.T."/>
            <person name="Searle S.M."/>
            <person name="Sehra H.K."/>
            <person name="Sheridan E."/>
            <person name="Skuce C.D."/>
            <person name="Smith S."/>
            <person name="Smith M."/>
            <person name="Spraggon L."/>
            <person name="Squares S.L."/>
            <person name="Steward C.A."/>
            <person name="Sycamore N."/>
            <person name="Tamlyn-Hall G."/>
            <person name="Tester J."/>
            <person name="Theaker A.J."/>
            <person name="Thomas D.W."/>
            <person name="Thorpe A."/>
            <person name="Tracey A."/>
            <person name="Tromans A."/>
            <person name="Tubby B."/>
            <person name="Wall M."/>
            <person name="Wallis J.M."/>
            <person name="West A.P."/>
            <person name="White S.S."/>
            <person name="Whitehead S.L."/>
            <person name="Whittaker H."/>
            <person name="Wild A."/>
            <person name="Willey D.J."/>
            <person name="Wilmer T.E."/>
            <person name="Wood J.M."/>
            <person name="Wray P.W."/>
            <person name="Wyatt J.C."/>
            <person name="Young L."/>
            <person name="Younger R.M."/>
            <person name="Bentley D.R."/>
            <person name="Coulson A."/>
            <person name="Durbin R.M."/>
            <person name="Hubbard T."/>
            <person name="Sulston J.E."/>
            <person name="Dunham I."/>
            <person name="Rogers J."/>
            <person name="Beck S."/>
        </authorList>
    </citation>
    <scope>NUCLEOTIDE SEQUENCE [LARGE SCALE GENOMIC DNA]</scope>
</reference>
<reference key="4">
    <citation type="journal article" date="2004" name="Genome Res.">
        <title>The status, quality, and expansion of the NIH full-length cDNA project: the Mammalian Gene Collection (MGC).</title>
        <authorList>
            <consortium name="The MGC Project Team"/>
        </authorList>
    </citation>
    <scope>NUCLEOTIDE SEQUENCE [LARGE SCALE MRNA] (ISOFORM 1)</scope>
    <scope>VARIANT ARG-813</scope>
    <source>
        <tissue>Eye</tissue>
    </source>
</reference>
<reference key="5">
    <citation type="journal article" date="2002" name="Proc. Natl. Acad. Sci. U.S.A.">
        <title>CUL7: a DOC domain-containing cullin selectively binds Skp1.Fbx29 to form an SCF-like complex.</title>
        <authorList>
            <person name="Dias D.C."/>
            <person name="Dolios G."/>
            <person name="Wang R."/>
            <person name="Pan Z.Q."/>
        </authorList>
    </citation>
    <scope>IDENTIFICATION IN A COMPLEX WITH SKP1; FBXW8 AND RBX1</scope>
</reference>
<reference key="6">
    <citation type="journal article" date="2003" name="Proc. Natl. Acad. Sci. U.S.A.">
        <title>Targeted disruption of p185/Cul7 gene results in abnormal vascular morphogenesis.</title>
        <authorList>
            <person name="Arai T."/>
            <person name="Kasper J.S."/>
            <person name="Skaar J.R."/>
            <person name="Ali S.H."/>
            <person name="Takahashi C."/>
            <person name="DeCaprio J.A."/>
        </authorList>
    </citation>
    <scope>INTERACTION WITH RBX1</scope>
    <scope>IDENTIFICATION IN A COMPLEX WITH SKP1; FBXW8; RBX1 AND GLMN</scope>
</reference>
<reference key="7">
    <citation type="journal article" date="2005" name="J. Virol.">
        <title>Simian virus 40 large T antigen's association with the CUL7 SCF complex contributes to cellular transformation.</title>
        <authorList>
            <person name="Kasper J.S."/>
            <person name="Kuwabara H."/>
            <person name="Arai T."/>
            <person name="Ali S.H."/>
            <person name="DeCaprio J.A."/>
        </authorList>
    </citation>
    <scope>INTERACTION WITH SV40 LARGE ANTIGEN (MICROBIAL INFECTION)</scope>
</reference>
<reference key="8">
    <citation type="journal article" date="2005" name="Mol. Cell. Biol.">
        <title>Dimerization of CUL7 and PARC is not required for all CUL7 functions and mouse development.</title>
        <authorList>
            <person name="Skaar J.R."/>
            <person name="Arai T."/>
            <person name="DeCaprio J.A."/>
        </authorList>
    </citation>
    <scope>INTERACTION WITH CUL9</scope>
</reference>
<reference key="9">
    <citation type="journal article" date="2006" name="Oncogene">
        <title>Cytoplasmic localized ubiquitin ligase cullin 7 binds to p53 and promotes cell growth by antagonizing p53 function.</title>
        <authorList>
            <person name="Andrews P."/>
            <person name="He Y.J."/>
            <person name="Xiong Y."/>
        </authorList>
    </citation>
    <scope>FUNCTION</scope>
    <scope>DOMAIN</scope>
    <scope>INTERACTION WITH RBX1 AND TP53</scope>
    <scope>SUBCELLULAR LOCATION</scope>
</reference>
<reference key="10">
    <citation type="journal article" date="2007" name="Cancer Res.">
        <title>PARC and CUL7 form atypical cullin RING ligase complexes.</title>
        <authorList>
            <person name="Skaar J.R."/>
            <person name="Florens L."/>
            <person name="Tsutsumi T."/>
            <person name="Arai T."/>
            <person name="Tron A."/>
            <person name="Swanson S.K."/>
            <person name="Washburn M.P."/>
            <person name="DeCaprio J.A."/>
        </authorList>
    </citation>
    <scope>FUNCTION</scope>
    <scope>DOMAIN</scope>
    <scope>INTERACTION WITH CUL9; SKP1; FBXW8; RBX1 AND TP53</scope>
    <scope>LACK OF NEDDYLATION</scope>
</reference>
<reference key="11">
    <citation type="journal article" date="2007" name="J. Med. Genet.">
        <title>Clinical, molecular and histopathological features of short stature syndrome with novel CUL7 mutation in Yakuts: new population isolate in Asia.</title>
        <authorList>
            <person name="Maksimova N."/>
            <person name="Hara K."/>
            <person name="Miyashia A."/>
            <person name="Nikolaeva I."/>
            <person name="Shiga A."/>
            <person name="Nogovicina A."/>
            <person name="Sukhomyasova A."/>
            <person name="Argunov V."/>
            <person name="Shvedova A."/>
            <person name="Ikeuchi T."/>
            <person name="Nishizawa M."/>
            <person name="Kuwano R."/>
            <person name="Onodera O."/>
        </authorList>
    </citation>
    <scope>INVOLVEMENT IN 3M1</scope>
</reference>
<reference key="12">
    <citation type="journal article" date="2008" name="Mol. Cell">
        <title>The CUL7 E3 ubiquitin ligase targets insulin receptor substrate 1 for ubiquitin-dependent degradation.</title>
        <authorList>
            <person name="Xu X."/>
            <person name="Sarikas A."/>
            <person name="Dias-Santagata D.C."/>
            <person name="Dolios G."/>
            <person name="Lafontant P.J."/>
            <person name="Tsai S.C."/>
            <person name="Zhu W."/>
            <person name="Nakajima H."/>
            <person name="Nakajima H.O."/>
            <person name="Field L.J."/>
            <person name="Wang R."/>
            <person name="Pan Z.Q."/>
        </authorList>
    </citation>
    <scope>FUNCTION</scope>
</reference>
<reference key="13">
    <citation type="journal article" date="2008" name="Proc. Natl. Acad. Sci. U.S.A.">
        <title>A quantitative atlas of mitotic phosphorylation.</title>
        <authorList>
            <person name="Dephoure N."/>
            <person name="Zhou C."/>
            <person name="Villen J."/>
            <person name="Beausoleil S.A."/>
            <person name="Bakalarski C.E."/>
            <person name="Elledge S.J."/>
            <person name="Gygi S.P."/>
        </authorList>
    </citation>
    <scope>PHOSPHORYLATION [LARGE SCALE ANALYSIS] AT SER-339</scope>
    <scope>IDENTIFICATION BY MASS SPECTROMETRY [LARGE SCALE ANALYSIS]</scope>
    <source>
        <tissue>Cervix carcinoma</tissue>
    </source>
</reference>
<reference key="14">
    <citation type="journal article" date="2010" name="Sci. Signal.">
        <title>Quantitative phosphoproteomics reveals widespread full phosphorylation site occupancy during mitosis.</title>
        <authorList>
            <person name="Olsen J.V."/>
            <person name="Vermeulen M."/>
            <person name="Santamaria A."/>
            <person name="Kumar C."/>
            <person name="Miller M.L."/>
            <person name="Jensen L.J."/>
            <person name="Gnad F."/>
            <person name="Cox J."/>
            <person name="Jensen T.S."/>
            <person name="Nigg E.A."/>
            <person name="Brunak S."/>
            <person name="Mann M."/>
        </authorList>
    </citation>
    <scope>IDENTIFICATION BY MASS SPECTROMETRY [LARGE SCALE ANALYSIS]</scope>
    <source>
        <tissue>Cervix carcinoma</tissue>
    </source>
</reference>
<reference key="15">
    <citation type="journal article" date="2011" name="Am. J. Hum. Genet.">
        <title>Exome sequencing identifies CCDC8 mutations in 3-M syndrome, Suggesting that CCDC8 Contributes in a Pathway with CUL7 and OBSL1 to Control Human Growth.</title>
        <authorList>
            <person name="Hanson D."/>
            <person name="Murray P.G."/>
            <person name="O'Sullivan J."/>
            <person name="Urquhart J."/>
            <person name="Daly S."/>
            <person name="Bhaskar S.S."/>
            <person name="Biesecker L.G."/>
            <person name="Skae M."/>
            <person name="Smith C."/>
            <person name="Cole T."/>
            <person name="Kirk J."/>
            <person name="Chandler K."/>
            <person name="Kingston H."/>
            <person name="Donnai D."/>
            <person name="Clayton P.E."/>
            <person name="Black G.C."/>
        </authorList>
    </citation>
    <scope>INTERACTION WITH OBSL1</scope>
</reference>
<reference key="16">
    <citation type="journal article" date="2011" name="BMC Syst. Biol.">
        <title>Initial characterization of the human central proteome.</title>
        <authorList>
            <person name="Burkard T.R."/>
            <person name="Planyavsky M."/>
            <person name="Kaupe I."/>
            <person name="Breitwieser F.P."/>
            <person name="Buerckstuemmer T."/>
            <person name="Bennett K.L."/>
            <person name="Superti-Furga G."/>
            <person name="Colinge J."/>
        </authorList>
    </citation>
    <scope>IDENTIFICATION BY MASS SPECTROMETRY [LARGE SCALE ANALYSIS]</scope>
</reference>
<reference key="17">
    <citation type="journal article" date="2011" name="PLoS Biol.">
        <title>An OBSL1-Cul7Fbxw8 ubiquitin ligase signaling mechanism regulates Golgi morphology and dendrite patterning.</title>
        <authorList>
            <person name="Litterman N."/>
            <person name="Ikeuchi Y."/>
            <person name="Gallardo G."/>
            <person name="O'Connell B.C."/>
            <person name="Sowa M.E."/>
            <person name="Gygi S.P."/>
            <person name="Harper J.W."/>
            <person name="Bonni A."/>
        </authorList>
    </citation>
    <scope>FUNCTION</scope>
    <scope>INTERACTION WITH FBXW8 AND OBSL1</scope>
    <scope>SUBCELLULAR LOCATION</scope>
</reference>
<reference key="18">
    <citation type="journal article" date="2010" name="J. Biol. Chem.">
        <title>Ubiquitin ligase cullin 7 induces epithelial-mesenchymal transition in human choriocarcinoma cells.</title>
        <authorList>
            <person name="Fu J."/>
            <person name="Lv X."/>
            <person name="Lin H."/>
            <person name="Wu L."/>
            <person name="Wang R."/>
            <person name="Zhou Z."/>
            <person name="Zhang B."/>
            <person name="Wang Y.L."/>
            <person name="Tsang B.K."/>
            <person name="Zhu C."/>
            <person name="Wang H."/>
        </authorList>
    </citation>
    <scope>FUNCTION</scope>
    <scope>DEVELOPMENTAL STAGE</scope>
</reference>
<reference key="19">
    <citation type="journal article" date="2013" name="J. Proteome Res.">
        <title>Toward a comprehensive characterization of a human cancer cell phosphoproteome.</title>
        <authorList>
            <person name="Zhou H."/>
            <person name="Di Palma S."/>
            <person name="Preisinger C."/>
            <person name="Peng M."/>
            <person name="Polat A.N."/>
            <person name="Heck A.J."/>
            <person name="Mohammed S."/>
        </authorList>
    </citation>
    <scope>IDENTIFICATION BY MASS SPECTROMETRY [LARGE SCALE ANALYSIS]</scope>
    <source>
        <tissue>Cervix carcinoma</tissue>
    </source>
</reference>
<reference key="20">
    <citation type="journal article" date="2014" name="J. Biol. Chem.">
        <title>The CUL7/F-box and WD repeat domain containing 8 (CUL7/Fbxw8) ubiquitin ligase promotes degradation of hematopoietic progenitor kinase 1.</title>
        <authorList>
            <person name="Wang H."/>
            <person name="Chen Y."/>
            <person name="Lin P."/>
            <person name="Li L."/>
            <person name="Zhou G."/>
            <person name="Liu G."/>
            <person name="Logsdon C."/>
            <person name="Jin J."/>
            <person name="Abbruzzese J.L."/>
            <person name="Tan T.H."/>
            <person name="Wang H."/>
        </authorList>
    </citation>
    <scope>FUNCTION</scope>
    <scope>INTERACTION WITH FBXW8</scope>
</reference>
<reference key="21">
    <citation type="journal article" date="2014" name="Mol. Cell">
        <title>The 3M complex maintains microtubule and genome integrity.</title>
        <authorList>
            <person name="Yan J."/>
            <person name="Yan F."/>
            <person name="Li Z."/>
            <person name="Sinnott B."/>
            <person name="Cappell K.M."/>
            <person name="Yu Y."/>
            <person name="Mo J."/>
            <person name="Duncan J.A."/>
            <person name="Chen X."/>
            <person name="Cormier-Daire V."/>
            <person name="Whitehurst A.W."/>
            <person name="Xiong Y."/>
        </authorList>
    </citation>
    <scope>FUNCTION</scope>
    <scope>IDENTIFICATION IN THE 3M COMPLEX</scope>
    <scope>SUBCELLULAR LOCATION</scope>
</reference>
<reference key="22">
    <citation type="journal article" date="2014" name="Mol. Cell">
        <title>CUL9 mediates the functions of the 3M complex and ubiquitylates survivin to maintain genome integrity.</title>
        <authorList>
            <person name="Li Z."/>
            <person name="Pei X.H."/>
            <person name="Yan J."/>
            <person name="Yan F."/>
            <person name="Cappell K.M."/>
            <person name="Whitehurst A.W."/>
            <person name="Xiong Y."/>
        </authorList>
    </citation>
    <scope>FUNCTION</scope>
    <scope>INTERACTION WITH CUL9</scope>
</reference>
<reference key="23">
    <citation type="journal article" date="2015" name="Structure">
        <title>Ankyrin repeats of ANKRA2 recognize a PxLPxL motif on the 3M syndrome protein CCDC8.</title>
        <authorList>
            <person name="Nie J."/>
            <person name="Xu C."/>
            <person name="Jin J."/>
            <person name="Aka J.A."/>
            <person name="Tempel W."/>
            <person name="Nguyen V."/>
            <person name="You L."/>
            <person name="Weist R."/>
            <person name="Min J."/>
            <person name="Pawson T."/>
            <person name="Yang X.J."/>
        </authorList>
    </citation>
    <scope>INTERACTION WITH HDAC4 AND HDAC5</scope>
</reference>
<reference evidence="29" key="24">
    <citation type="journal article" date="2007" name="J. Biol. Chem.">
        <title>The conserved CPH domains of Cul7 and PARC are protein-protein interaction modules that bind the tetramerization domain of p53.</title>
        <authorList>
            <person name="Kaustov L."/>
            <person name="Lukin J."/>
            <person name="Lemak A."/>
            <person name="Duan S."/>
            <person name="Ho M."/>
            <person name="Doherty R."/>
            <person name="Penn L.Z."/>
            <person name="Arrowsmith C.H."/>
        </authorList>
    </citation>
    <scope>STRUCTURE BY NMR OF 360-460</scope>
    <scope>DOMAIN</scope>
    <scope>INTERACTION WITH TP53</scope>
</reference>
<reference key="25">
    <citation type="journal article" date="2005" name="Nat. Genet.">
        <title>Identification of mutations in CUL7 in 3-M syndrome.</title>
        <authorList>
            <person name="Huber C."/>
            <person name="Dias-Santagata D."/>
            <person name="Glaser A."/>
            <person name="O'Sullivan J."/>
            <person name="Brauner R."/>
            <person name="Wu K."/>
            <person name="Xu X."/>
            <person name="Pearce K."/>
            <person name="Wang R."/>
            <person name="Giovannucci Uzielli M.L."/>
            <person name="Dagoneau N."/>
            <person name="Chemaitilly W."/>
            <person name="Superti-Furga A."/>
            <person name="Dos Santos H."/>
            <person name="Megarbane A."/>
            <person name="Morin G."/>
            <person name="Gillessen-Kaesbach G."/>
            <person name="Hennekam R.C.M."/>
            <person name="Van der Burgt I."/>
            <person name="Black G.C.M."/>
            <person name="Clayton P.E."/>
            <person name="Read A."/>
            <person name="Le Merrer M."/>
            <person name="Scambler P.J."/>
            <person name="Munnich A."/>
            <person name="Pan Z.-Q."/>
            <person name="Winter R."/>
            <person name="Cormier-Daire V."/>
        </authorList>
    </citation>
    <scope>VARIANTS 3M1 ARG-1014; GLY-1246 AND PRO-1464</scope>
    <scope>TISSUE SPECIFICITY</scope>
</reference>
<reference key="26">
    <citation type="journal article" date="2012" name="J. Mol. Endocrinol.">
        <title>Mutations in CUL7, OBSL1 and CCDC8 in 3-M syndrome lead to disordered growth factor signalling.</title>
        <authorList>
            <person name="Hanson D."/>
            <person name="Murray P.G."/>
            <person name="Coulson T."/>
            <person name="Sud A."/>
            <person name="Omokanye A."/>
            <person name="Stratta E."/>
            <person name="Sakhinia F."/>
            <person name="Bonshek C."/>
            <person name="Wilson L.C."/>
            <person name="Wakeling E."/>
            <person name="Temtamy S.A."/>
            <person name="Aglan M."/>
            <person name="Rosser E.M."/>
            <person name="Mansour S."/>
            <person name="Carcavilla A."/>
            <person name="Nampoothiri S."/>
            <person name="Khan W.I."/>
            <person name="Banerjee I."/>
            <person name="Chandler K.E."/>
            <person name="Black G.C."/>
            <person name="Clayton P.E."/>
        </authorList>
    </citation>
    <scope>VARIANT 3M1 PRO-1588</scope>
</reference>
<reference evidence="30" key="27">
    <citation type="journal article" date="2022" name="Nat. Struct. Mol. Biol.">
        <title>Structure of CRL7FBXW8 reveals coupling with CUL1-RBX1/ROC1 for multi-cullin-RING E3-catalyzed ubiquitin ligation.</title>
        <authorList>
            <person name="Hopf L.V.M."/>
            <person name="Baek K."/>
            <person name="Kluegel M."/>
            <person name="von Gronau S."/>
            <person name="Xiong Y."/>
            <person name="Schulman B.A."/>
        </authorList>
    </citation>
    <scope>STRUCTURE BY ELECTRON MICROSCOPY (2.80 ANGSTROMS) IN CUL7-RING(FBXW8) COMPLEX</scope>
    <scope>FUNCTION</scope>
    <scope>SUBUNIT</scope>
    <scope>DOMAIN</scope>
    <scope>CHARACTERIZATION OF VARIANTS ARG-1014 AND PRO-1464</scope>
    <scope>MUTAGENESIS OF 389-TYR--ASN-404</scope>
</reference>
<organism>
    <name type="scientific">Homo sapiens</name>
    <name type="common">Human</name>
    <dbReference type="NCBI Taxonomy" id="9606"/>
    <lineage>
        <taxon>Eukaryota</taxon>
        <taxon>Metazoa</taxon>
        <taxon>Chordata</taxon>
        <taxon>Craniata</taxon>
        <taxon>Vertebrata</taxon>
        <taxon>Euteleostomi</taxon>
        <taxon>Mammalia</taxon>
        <taxon>Eutheria</taxon>
        <taxon>Euarchontoglires</taxon>
        <taxon>Primates</taxon>
        <taxon>Haplorrhini</taxon>
        <taxon>Catarrhini</taxon>
        <taxon>Hominidae</taxon>
        <taxon>Homo</taxon>
    </lineage>
</organism>
<proteinExistence type="evidence at protein level"/>